<sequence length="314" mass="33786">MKEIVRALEGYGPPKDKAAEQCGWQAGGALCPGGLCCSQYGWCANTPEYCGSGCQSQCDGGGGGEDGGIDLGSIISRSTFEEMLKHRNDAACPAKGFYTYDAFISAAKAFPAFGTTGDVDTRKREIAAFFGQTSHATTGGWPTAPDGPYAWGYCYKEELNQASSYCSPSPAYPCAPGKKYYGRGPIQLSWNYNYGQCGQALGLDLLNNPDLVATDRVISFKAAIWFWMTPQFPKPSCHDVITGQWSPTGHDISAGRAPGYGVITNIINGGLECGRGWDARVEDRIGFYKRYCDMFAVGYGSNLDCYNQTPFGLG</sequence>
<proteinExistence type="evidence at protein level"/>
<gene>
    <name evidence="8" type="primary">CHI-L1</name>
    <name evidence="9" type="synonym">RQ30</name>
</gene>
<protein>
    <recommendedName>
        <fullName evidence="7">Inactive chitinase-like protein 1</fullName>
        <shortName evidence="6">HbCLP1</shortName>
    </recommendedName>
    <allergenName evidence="5">Hev b 11</allergenName>
</protein>
<keyword id="KW-0002">3D-structure</keyword>
<keyword id="KW-0020">Allergen</keyword>
<keyword id="KW-0147">Chitin-binding</keyword>
<keyword id="KW-1015">Disulfide bond</keyword>
<keyword id="KW-0611">Plant defense</keyword>
<keyword id="KW-0732">Signal</keyword>
<name>CHI1_HEVBR</name>
<feature type="signal peptide" evidence="1">
    <location>
        <begin position="1"/>
        <end position="19"/>
    </location>
</feature>
<feature type="chain" id="PRO_0000447214" description="Inactive chitinase-like protein 1">
    <location>
        <begin position="20"/>
        <end position="314"/>
    </location>
</feature>
<feature type="domain" description="Chitin-binding type-1" evidence="2">
    <location>
        <begin position="20"/>
        <end position="60"/>
    </location>
</feature>
<feature type="disulfide bond" evidence="2">
    <location>
        <begin position="22"/>
        <end position="37"/>
    </location>
</feature>
<feature type="disulfide bond" evidence="2">
    <location>
        <begin position="31"/>
        <end position="43"/>
    </location>
</feature>
<feature type="disulfide bond" evidence="2">
    <location>
        <begin position="36"/>
        <end position="50"/>
    </location>
</feature>
<feature type="disulfide bond" evidence="2">
    <location>
        <begin position="54"/>
        <end position="58"/>
    </location>
</feature>
<feature type="disulfide bond" evidence="4 10">
    <location>
        <begin position="92"/>
        <end position="154"/>
    </location>
</feature>
<feature type="disulfide bond" evidence="4 10">
    <location>
        <begin position="166"/>
        <end position="174"/>
    </location>
</feature>
<feature type="disulfide bond" evidence="4 10">
    <location>
        <begin position="273"/>
        <end position="305"/>
    </location>
</feature>
<feature type="sequence conflict" description="In Ref. 2; CAC42881." ref="2">
    <original>W</original>
    <variation>R</variation>
    <location>
        <position position="24"/>
    </location>
</feature>
<feature type="sequence conflict" description="In Ref. 2; CAC42881." ref="2">
    <original>R</original>
    <variation>C</variation>
    <location>
        <position position="122"/>
    </location>
</feature>
<feature type="sequence conflict" description="In Ref. 1; AHF88836." evidence="7" ref="1">
    <location>
        <position position="139"/>
    </location>
</feature>
<feature type="helix" evidence="11">
    <location>
        <begin position="77"/>
        <end position="83"/>
    </location>
</feature>
<feature type="turn" evidence="11">
    <location>
        <begin position="84"/>
        <end position="88"/>
    </location>
</feature>
<feature type="turn" evidence="11">
    <location>
        <begin position="93"/>
        <end position="97"/>
    </location>
</feature>
<feature type="helix" evidence="11">
    <location>
        <begin position="100"/>
        <end position="107"/>
    </location>
</feature>
<feature type="turn" evidence="11">
    <location>
        <begin position="111"/>
        <end position="114"/>
    </location>
</feature>
<feature type="strand" evidence="11">
    <location>
        <begin position="116"/>
        <end position="118"/>
    </location>
</feature>
<feature type="helix" evidence="11">
    <location>
        <begin position="119"/>
        <end position="136"/>
    </location>
</feature>
<feature type="helix" evidence="11">
    <location>
        <begin position="148"/>
        <end position="150"/>
    </location>
</feature>
<feature type="strand" evidence="11">
    <location>
        <begin position="170"/>
        <end position="172"/>
    </location>
</feature>
<feature type="turn" evidence="11">
    <location>
        <begin position="184"/>
        <end position="187"/>
    </location>
</feature>
<feature type="helix" evidence="11">
    <location>
        <begin position="191"/>
        <end position="201"/>
    </location>
</feature>
<feature type="turn" evidence="11">
    <location>
        <begin position="205"/>
        <end position="207"/>
    </location>
</feature>
<feature type="helix" evidence="11">
    <location>
        <begin position="211"/>
        <end position="214"/>
    </location>
</feature>
<feature type="helix" evidence="11">
    <location>
        <begin position="216"/>
        <end position="228"/>
    </location>
</feature>
<feature type="helix" evidence="11">
    <location>
        <begin position="237"/>
        <end position="241"/>
    </location>
</feature>
<feature type="helix" evidence="11">
    <location>
        <begin position="249"/>
        <end position="253"/>
    </location>
</feature>
<feature type="helix" evidence="11">
    <location>
        <begin position="260"/>
        <end position="272"/>
    </location>
</feature>
<feature type="strand" evidence="11">
    <location>
        <begin position="273"/>
        <end position="276"/>
    </location>
</feature>
<feature type="helix" evidence="11">
    <location>
        <begin position="279"/>
        <end position="295"/>
    </location>
</feature>
<evidence type="ECO:0000255" key="1"/>
<evidence type="ECO:0000255" key="2">
    <source>
        <dbReference type="PROSITE-ProRule" id="PRU00261"/>
    </source>
</evidence>
<evidence type="ECO:0000269" key="3">
    <source>
    </source>
</evidence>
<evidence type="ECO:0000269" key="4">
    <source>
    </source>
</evidence>
<evidence type="ECO:0000303" key="5">
    <source>
    </source>
</evidence>
<evidence type="ECO:0000303" key="6">
    <source>
    </source>
</evidence>
<evidence type="ECO:0000305" key="7"/>
<evidence type="ECO:0000312" key="8">
    <source>
        <dbReference type="EMBL" id="AHF88836.1"/>
    </source>
</evidence>
<evidence type="ECO:0000312" key="9">
    <source>
        <dbReference type="EMBL" id="CAC42881.1"/>
    </source>
</evidence>
<evidence type="ECO:0007744" key="10">
    <source>
        <dbReference type="PDB" id="4MST"/>
    </source>
</evidence>
<evidence type="ECO:0007829" key="11">
    <source>
        <dbReference type="PDB" id="4MST"/>
    </source>
</evidence>
<accession>Q949H3</accession>
<accession>W0IVX0</accession>
<organism>
    <name type="scientific">Hevea brasiliensis</name>
    <name type="common">Para rubber tree</name>
    <name type="synonym">Siphonia brasiliensis</name>
    <dbReference type="NCBI Taxonomy" id="3981"/>
    <lineage>
        <taxon>Eukaryota</taxon>
        <taxon>Viridiplantae</taxon>
        <taxon>Streptophyta</taxon>
        <taxon>Embryophyta</taxon>
        <taxon>Tracheophyta</taxon>
        <taxon>Spermatophyta</taxon>
        <taxon>Magnoliopsida</taxon>
        <taxon>eudicotyledons</taxon>
        <taxon>Gunneridae</taxon>
        <taxon>Pentapetalae</taxon>
        <taxon>rosids</taxon>
        <taxon>fabids</taxon>
        <taxon>Malpighiales</taxon>
        <taxon>Euphorbiaceae</taxon>
        <taxon>Crotonoideae</taxon>
        <taxon>Micrandreae</taxon>
        <taxon>Hevea</taxon>
    </lineage>
</organism>
<reference key="1">
    <citation type="journal article" date="2014" name="FEBS J.">
        <title>Comparative study of two GH19 chitinase-like proteins from Hevea brasiliensis, one exhibiting a novel carbohydrate-binding domain.</title>
        <authorList>
            <person name="Martinez-Caballero S."/>
            <person name="Cano-Sanchez P."/>
            <person name="Mares-Mejia I."/>
            <person name="Diaz-Sanchez A.G."/>
            <person name="Macias-Rubalcava M.L."/>
            <person name="Hermoso J.A."/>
            <person name="Rodriguez-Romero A."/>
        </authorList>
    </citation>
    <scope>NUCLEOTIDE SEQUENCE [GENOMIC DNA]</scope>
    <scope>X-RAY CRYSTALLOGRAPHY (1.93 ANGSTROMS) OF 73-314</scope>
    <scope>DISULFIDE BONDS</scope>
    <scope>FUNCTION</scope>
    <source>
        <strain>cv. RRIM 600</strain>
    </source>
</reference>
<reference key="2">
    <citation type="journal article" date="2002" name="Clin. Exp. Allergy">
        <title>Cloning and molecular characterization of the Hevea brasiliensis allergen Hev b 11, a class I chitinase.</title>
        <authorList>
            <person name="O'Riordain G."/>
            <person name="Radauer C."/>
            <person name="Hoffmann-Sommergruber K."/>
            <person name="Adhami F."/>
            <person name="Peterbauer C.K."/>
            <person name="Blanco C."/>
            <person name="Godnic-Cvar J."/>
            <person name="Scheiner O."/>
            <person name="Ebner C."/>
            <person name="Breitender H."/>
        </authorList>
    </citation>
    <scope>NUCLEOTIDE SEQUENCE [MRNA] OF 20-314</scope>
    <scope>ALLERGEN</scope>
    <source>
        <strain>cv. RRIM 600</strain>
    </source>
</reference>
<dbReference type="EMBL" id="KF648872">
    <property type="protein sequence ID" value="AHF88836.1"/>
    <property type="molecule type" value="Genomic_DNA"/>
</dbReference>
<dbReference type="EMBL" id="AJ238579">
    <property type="protein sequence ID" value="CAC42881.1"/>
    <property type="molecule type" value="mRNA"/>
</dbReference>
<dbReference type="PDB" id="4MST">
    <property type="method" value="X-ray"/>
    <property type="resolution" value="1.93 A"/>
    <property type="chains" value="A/B=73-314"/>
</dbReference>
<dbReference type="PDBsum" id="4MST"/>
<dbReference type="SMR" id="Q949H3"/>
<dbReference type="Allergome" id="384">
    <property type="allergen name" value="Hev b 11"/>
</dbReference>
<dbReference type="Allergome" id="977">
    <property type="allergen name" value="Hev b 11.0101"/>
</dbReference>
<dbReference type="CAZy" id="CBM18">
    <property type="family name" value="Carbohydrate-Binding Module Family 18"/>
</dbReference>
<dbReference type="CAZy" id="GH19">
    <property type="family name" value="Glycoside Hydrolase Family 19"/>
</dbReference>
<dbReference type="EvolutionaryTrace" id="Q949H3"/>
<dbReference type="GO" id="GO:0008061">
    <property type="term" value="F:chitin binding"/>
    <property type="evidence" value="ECO:0000314"/>
    <property type="project" value="UniProtKB"/>
</dbReference>
<dbReference type="GO" id="GO:0005975">
    <property type="term" value="P:carbohydrate metabolic process"/>
    <property type="evidence" value="ECO:0007669"/>
    <property type="project" value="InterPro"/>
</dbReference>
<dbReference type="GO" id="GO:0016998">
    <property type="term" value="P:cell wall macromolecule catabolic process"/>
    <property type="evidence" value="ECO:0007669"/>
    <property type="project" value="InterPro"/>
</dbReference>
<dbReference type="GO" id="GO:0006032">
    <property type="term" value="P:chitin catabolic process"/>
    <property type="evidence" value="ECO:0007669"/>
    <property type="project" value="InterPro"/>
</dbReference>
<dbReference type="GO" id="GO:0050832">
    <property type="term" value="P:defense response to fungus"/>
    <property type="evidence" value="ECO:0000314"/>
    <property type="project" value="UniProtKB"/>
</dbReference>
<dbReference type="CDD" id="cd00325">
    <property type="entry name" value="chitinase_GH19"/>
    <property type="match status" value="1"/>
</dbReference>
<dbReference type="CDD" id="cd06921">
    <property type="entry name" value="ChtBD1_GH19_hevein"/>
    <property type="match status" value="1"/>
</dbReference>
<dbReference type="FunFam" id="3.30.60.10:FF:000001">
    <property type="entry name" value="Basic endochitinase"/>
    <property type="match status" value="1"/>
</dbReference>
<dbReference type="FunFam" id="3.30.20.10:FF:000001">
    <property type="entry name" value="Endochitinase (Chitinase)"/>
    <property type="match status" value="1"/>
</dbReference>
<dbReference type="Gene3D" id="1.10.530.10">
    <property type="match status" value="1"/>
</dbReference>
<dbReference type="Gene3D" id="3.30.20.10">
    <property type="entry name" value="Endochitinase, domain 2"/>
    <property type="match status" value="1"/>
</dbReference>
<dbReference type="Gene3D" id="3.30.60.10">
    <property type="entry name" value="Endochitinase-like"/>
    <property type="match status" value="1"/>
</dbReference>
<dbReference type="InterPro" id="IPR001002">
    <property type="entry name" value="Chitin-bd_1"/>
</dbReference>
<dbReference type="InterPro" id="IPR036861">
    <property type="entry name" value="Endochitinase-like_sf"/>
</dbReference>
<dbReference type="InterPro" id="IPR016283">
    <property type="entry name" value="Glyco_hydro_19"/>
</dbReference>
<dbReference type="InterPro" id="IPR000726">
    <property type="entry name" value="Glyco_hydro_19_cat"/>
</dbReference>
<dbReference type="InterPro" id="IPR023346">
    <property type="entry name" value="Lysozyme-like_dom_sf"/>
</dbReference>
<dbReference type="PANTHER" id="PTHR22595:SF79">
    <property type="entry name" value="CHITINASE 12"/>
    <property type="match status" value="1"/>
</dbReference>
<dbReference type="PANTHER" id="PTHR22595">
    <property type="entry name" value="CHITINASE-RELATED"/>
    <property type="match status" value="1"/>
</dbReference>
<dbReference type="Pfam" id="PF00187">
    <property type="entry name" value="Chitin_bind_1"/>
    <property type="match status" value="1"/>
</dbReference>
<dbReference type="Pfam" id="PF00182">
    <property type="entry name" value="Glyco_hydro_19"/>
    <property type="match status" value="1"/>
</dbReference>
<dbReference type="PIRSF" id="PIRSF001060">
    <property type="entry name" value="Endochitinase"/>
    <property type="match status" value="1"/>
</dbReference>
<dbReference type="PRINTS" id="PR00451">
    <property type="entry name" value="CHITINBINDNG"/>
</dbReference>
<dbReference type="SMART" id="SM00270">
    <property type="entry name" value="ChtBD1"/>
    <property type="match status" value="1"/>
</dbReference>
<dbReference type="SUPFAM" id="SSF53955">
    <property type="entry name" value="Lysozyme-like"/>
    <property type="match status" value="1"/>
</dbReference>
<dbReference type="SUPFAM" id="SSF57016">
    <property type="entry name" value="Plant lectins/antimicrobial peptides"/>
    <property type="match status" value="1"/>
</dbReference>
<dbReference type="PROSITE" id="PS50941">
    <property type="entry name" value="CHIT_BIND_I_2"/>
    <property type="match status" value="1"/>
</dbReference>
<dbReference type="PROSITE" id="PS00773">
    <property type="entry name" value="CHITINASE_19_1"/>
    <property type="match status" value="1"/>
</dbReference>
<dbReference type="PROSITE" id="PS00774">
    <property type="entry name" value="CHITINASE_19_2"/>
    <property type="match status" value="1"/>
</dbReference>
<comment type="function">
    <text evidence="3 4">Inactive chitinase-like protein that does not exhibit hydrolytic activity toward chitin (PubMed:25104038). Binds strongly to chitin and possesses antifungal activity toward the fungal pathogen Altenaria alternata in plate assays (PubMed:25104038). Inhibits the growth of Fusarium oxysporum on plate assays (PubMed:11940078). Probably involved in defense against fungal pathogens through a mechanism that only involves carbohydrate binding (PubMed:25104038).</text>
</comment>
<comment type="allergen">
    <text evidence="3">Causes an allergic reaction in human (PubMed:11940078). Binds to IgE from sera of patients allergic to rubber latex (PubMed:11940078).</text>
</comment>
<comment type="similarity">
    <text evidence="7">Belongs to the glycosyl hydrolase 19 family. Chitinase class I subfamily.</text>
</comment>
<comment type="caution">
    <text evidence="4">Lacks the conserved Glu active site in position 136, which is replaced by an Ala residue, explaining why it is inactive.</text>
</comment>